<sequence length="239" mass="25809">MSSVFDIDSVVLDIEGTTSATGFVVDVLYPYSRSRFGALLTERSGDPEVARAVAQVRELLGEPDADAVRVEKALNEWLDDDRKATPLKTLQGLVWSEGFARGELVSHFYDDVVPALRAWHAAGVRLHVYSSGSVAAQRAWFRSSPEGDLLPLVEGLYDTENAGPKQEPESYRTIAAALGTGADRILFLSDRPGELDAARAAGWRTVGVRRPGEPYYEQGVGDHAQAGSFGGITIARSTA</sequence>
<comment type="function">
    <text evidence="1">Bifunctional enzyme that catalyzes the enolization of 2,3-diketo-5-methylthiopentyl-1-phosphate (DK-MTP-1-P) into the intermediate 2-hydroxy-3-keto-5-methylthiopentenyl-1-phosphate (HK-MTPenyl-1-P), which is then dephosphorylated to form the acireductone 1,2-dihydroxy-3-keto-5-methylthiopentene (DHK-MTPene).</text>
</comment>
<comment type="catalytic activity">
    <reaction evidence="1">
        <text>5-methylsulfanyl-2,3-dioxopentyl phosphate + H2O = 1,2-dihydroxy-5-(methylsulfanyl)pent-1-en-3-one + phosphate</text>
        <dbReference type="Rhea" id="RHEA:21700"/>
        <dbReference type="ChEBI" id="CHEBI:15377"/>
        <dbReference type="ChEBI" id="CHEBI:43474"/>
        <dbReference type="ChEBI" id="CHEBI:49252"/>
        <dbReference type="ChEBI" id="CHEBI:58828"/>
        <dbReference type="EC" id="3.1.3.77"/>
    </reaction>
</comment>
<comment type="cofactor">
    <cofactor evidence="1">
        <name>Mg(2+)</name>
        <dbReference type="ChEBI" id="CHEBI:18420"/>
    </cofactor>
    <text evidence="1">Binds 1 Mg(2+) ion per subunit.</text>
</comment>
<comment type="pathway">
    <text evidence="1">Amino-acid biosynthesis; L-methionine biosynthesis via salvage pathway; L-methionine from S-methyl-5-thio-alpha-D-ribose 1-phosphate: step 3/6.</text>
</comment>
<comment type="pathway">
    <text evidence="1">Amino-acid biosynthesis; L-methionine biosynthesis via salvage pathway; L-methionine from S-methyl-5-thio-alpha-D-ribose 1-phosphate: step 4/6.</text>
</comment>
<comment type="subunit">
    <text evidence="1">Monomer.</text>
</comment>
<comment type="similarity">
    <text evidence="1">Belongs to the HAD-like hydrolase superfamily. MasA/MtnC family.</text>
</comment>
<evidence type="ECO:0000255" key="1">
    <source>
        <dbReference type="HAMAP-Rule" id="MF_01681"/>
    </source>
</evidence>
<name>MTNC_STRAW</name>
<gene>
    <name evidence="1" type="primary">mtnC</name>
    <name type="ordered locus">SAV_6660</name>
</gene>
<proteinExistence type="inferred from homology"/>
<dbReference type="EC" id="3.1.3.77" evidence="1"/>
<dbReference type="EMBL" id="BA000030">
    <property type="protein sequence ID" value="BAC74371.1"/>
    <property type="molecule type" value="Genomic_DNA"/>
</dbReference>
<dbReference type="RefSeq" id="WP_010988060.1">
    <property type="nucleotide sequence ID" value="NZ_JZJK01000082.1"/>
</dbReference>
<dbReference type="SMR" id="Q828K9"/>
<dbReference type="DNASU" id="1211526"/>
<dbReference type="GeneID" id="41543731"/>
<dbReference type="KEGG" id="sma:SAVERM_6660"/>
<dbReference type="eggNOG" id="COG4229">
    <property type="taxonomic scope" value="Bacteria"/>
</dbReference>
<dbReference type="HOGENOM" id="CLU_023273_0_0_11"/>
<dbReference type="OrthoDB" id="9797416at2"/>
<dbReference type="UniPathway" id="UPA00904">
    <property type="reaction ID" value="UER00876"/>
</dbReference>
<dbReference type="UniPathway" id="UPA00904">
    <property type="reaction ID" value="UER00877"/>
</dbReference>
<dbReference type="Proteomes" id="UP000000428">
    <property type="component" value="Chromosome"/>
</dbReference>
<dbReference type="GO" id="GO:0043715">
    <property type="term" value="F:2,3-diketo-5-methylthiopentyl-1-phosphate enolase activity"/>
    <property type="evidence" value="ECO:0007669"/>
    <property type="project" value="UniProtKB-UniRule"/>
</dbReference>
<dbReference type="GO" id="GO:0043716">
    <property type="term" value="F:2-hydroxy-3-keto-5-methylthiopentenyl-1-phosphate phosphatase activity"/>
    <property type="evidence" value="ECO:0007669"/>
    <property type="project" value="UniProtKB-UniRule"/>
</dbReference>
<dbReference type="GO" id="GO:0043874">
    <property type="term" value="F:acireductone synthase activity"/>
    <property type="evidence" value="ECO:0007669"/>
    <property type="project" value="UniProtKB-EC"/>
</dbReference>
<dbReference type="GO" id="GO:0000287">
    <property type="term" value="F:magnesium ion binding"/>
    <property type="evidence" value="ECO:0007669"/>
    <property type="project" value="UniProtKB-UniRule"/>
</dbReference>
<dbReference type="GO" id="GO:0019509">
    <property type="term" value="P:L-methionine salvage from methylthioadenosine"/>
    <property type="evidence" value="ECO:0007669"/>
    <property type="project" value="UniProtKB-UniRule"/>
</dbReference>
<dbReference type="CDD" id="cd01629">
    <property type="entry name" value="HAD_EP"/>
    <property type="match status" value="1"/>
</dbReference>
<dbReference type="Gene3D" id="1.10.720.60">
    <property type="match status" value="1"/>
</dbReference>
<dbReference type="Gene3D" id="3.40.50.1000">
    <property type="entry name" value="HAD superfamily/HAD-like"/>
    <property type="match status" value="1"/>
</dbReference>
<dbReference type="HAMAP" id="MF_01681">
    <property type="entry name" value="Salvage_MtnC"/>
    <property type="match status" value="1"/>
</dbReference>
<dbReference type="InterPro" id="IPR023943">
    <property type="entry name" value="Enolase-ppase_E1"/>
</dbReference>
<dbReference type="InterPro" id="IPR036412">
    <property type="entry name" value="HAD-like_sf"/>
</dbReference>
<dbReference type="InterPro" id="IPR023214">
    <property type="entry name" value="HAD_sf"/>
</dbReference>
<dbReference type="NCBIfam" id="TIGR01691">
    <property type="entry name" value="enolase-ppase"/>
    <property type="match status" value="1"/>
</dbReference>
<dbReference type="PANTHER" id="PTHR20371">
    <property type="entry name" value="ENOLASE-PHOSPHATASE E1"/>
    <property type="match status" value="1"/>
</dbReference>
<dbReference type="PANTHER" id="PTHR20371:SF1">
    <property type="entry name" value="ENOLASE-PHOSPHATASE E1"/>
    <property type="match status" value="1"/>
</dbReference>
<dbReference type="Pfam" id="PF00702">
    <property type="entry name" value="Hydrolase"/>
    <property type="match status" value="1"/>
</dbReference>
<dbReference type="SFLD" id="SFLDG01133">
    <property type="entry name" value="C1.5.4:_Enolase-phosphatase_Li"/>
    <property type="match status" value="1"/>
</dbReference>
<dbReference type="SFLD" id="SFLDS00003">
    <property type="entry name" value="Haloacid_Dehalogenase"/>
    <property type="match status" value="1"/>
</dbReference>
<dbReference type="SUPFAM" id="SSF56784">
    <property type="entry name" value="HAD-like"/>
    <property type="match status" value="1"/>
</dbReference>
<accession>Q828K9</accession>
<reference key="1">
    <citation type="journal article" date="2001" name="Proc. Natl. Acad. Sci. U.S.A.">
        <title>Genome sequence of an industrial microorganism Streptomyces avermitilis: deducing the ability of producing secondary metabolites.</title>
        <authorList>
            <person name="Omura S."/>
            <person name="Ikeda H."/>
            <person name="Ishikawa J."/>
            <person name="Hanamoto A."/>
            <person name="Takahashi C."/>
            <person name="Shinose M."/>
            <person name="Takahashi Y."/>
            <person name="Horikawa H."/>
            <person name="Nakazawa H."/>
            <person name="Osonoe T."/>
            <person name="Kikuchi H."/>
            <person name="Shiba T."/>
            <person name="Sakaki Y."/>
            <person name="Hattori M."/>
        </authorList>
    </citation>
    <scope>NUCLEOTIDE SEQUENCE [LARGE SCALE GENOMIC DNA]</scope>
    <source>
        <strain>ATCC 31267 / DSM 46492 / JCM 5070 / NBRC 14893 / NCIMB 12804 / NRRL 8165 / MA-4680</strain>
    </source>
</reference>
<reference key="2">
    <citation type="journal article" date="2003" name="Nat. Biotechnol.">
        <title>Complete genome sequence and comparative analysis of the industrial microorganism Streptomyces avermitilis.</title>
        <authorList>
            <person name="Ikeda H."/>
            <person name="Ishikawa J."/>
            <person name="Hanamoto A."/>
            <person name="Shinose M."/>
            <person name="Kikuchi H."/>
            <person name="Shiba T."/>
            <person name="Sakaki Y."/>
            <person name="Hattori M."/>
            <person name="Omura S."/>
        </authorList>
    </citation>
    <scope>NUCLEOTIDE SEQUENCE [LARGE SCALE GENOMIC DNA]</scope>
    <source>
        <strain>ATCC 31267 / DSM 46492 / JCM 5070 / NBRC 14893 / NCIMB 12804 / NRRL 8165 / MA-4680</strain>
    </source>
</reference>
<organism>
    <name type="scientific">Streptomyces avermitilis (strain ATCC 31267 / DSM 46492 / JCM 5070 / NBRC 14893 / NCIMB 12804 / NRRL 8165 / MA-4680)</name>
    <dbReference type="NCBI Taxonomy" id="227882"/>
    <lineage>
        <taxon>Bacteria</taxon>
        <taxon>Bacillati</taxon>
        <taxon>Actinomycetota</taxon>
        <taxon>Actinomycetes</taxon>
        <taxon>Kitasatosporales</taxon>
        <taxon>Streptomycetaceae</taxon>
        <taxon>Streptomyces</taxon>
    </lineage>
</organism>
<protein>
    <recommendedName>
        <fullName evidence="1">Enolase-phosphatase E1</fullName>
        <ecNumber evidence="1">3.1.3.77</ecNumber>
    </recommendedName>
    <alternativeName>
        <fullName evidence="1">2,3-diketo-5-methylthio-1-phosphopentane phosphatase</fullName>
    </alternativeName>
</protein>
<keyword id="KW-0028">Amino-acid biosynthesis</keyword>
<keyword id="KW-0378">Hydrolase</keyword>
<keyword id="KW-0460">Magnesium</keyword>
<keyword id="KW-0479">Metal-binding</keyword>
<keyword id="KW-0486">Methionine biosynthesis</keyword>
<keyword id="KW-1185">Reference proteome</keyword>
<feature type="chain" id="PRO_0000357416" description="Enolase-phosphatase E1">
    <location>
        <begin position="1"/>
        <end position="239"/>
    </location>
</feature>